<gene>
    <name evidence="1" type="primary">ndhN</name>
    <name type="ordered locus">Npun_F4391</name>
</gene>
<feature type="chain" id="PRO_0000352218" description="NAD(P)H-quinone oxidoreductase subunit N">
    <location>
        <begin position="1"/>
        <end position="158"/>
    </location>
</feature>
<proteinExistence type="inferred from homology"/>
<dbReference type="EC" id="7.1.1.-" evidence="1"/>
<dbReference type="EMBL" id="CP001037">
    <property type="protein sequence ID" value="ACC82764.1"/>
    <property type="molecule type" value="Genomic_DNA"/>
</dbReference>
<dbReference type="RefSeq" id="WP_012410726.1">
    <property type="nucleotide sequence ID" value="NC_010628.1"/>
</dbReference>
<dbReference type="SMR" id="B2ITQ6"/>
<dbReference type="STRING" id="63737.Npun_F4391"/>
<dbReference type="EnsemblBacteria" id="ACC82764">
    <property type="protein sequence ID" value="ACC82764"/>
    <property type="gene ID" value="Npun_F4391"/>
</dbReference>
<dbReference type="KEGG" id="npu:Npun_F4391"/>
<dbReference type="eggNOG" id="ENOG502ZBMI">
    <property type="taxonomic scope" value="Bacteria"/>
</dbReference>
<dbReference type="HOGENOM" id="CLU_087432_0_0_3"/>
<dbReference type="OrthoDB" id="510798at2"/>
<dbReference type="PhylomeDB" id="B2ITQ6"/>
<dbReference type="Proteomes" id="UP000001191">
    <property type="component" value="Chromosome"/>
</dbReference>
<dbReference type="GO" id="GO:0031676">
    <property type="term" value="C:plasma membrane-derived thylakoid membrane"/>
    <property type="evidence" value="ECO:0007669"/>
    <property type="project" value="UniProtKB-SubCell"/>
</dbReference>
<dbReference type="GO" id="GO:0016655">
    <property type="term" value="F:oxidoreductase activity, acting on NAD(P)H, quinone or similar compound as acceptor"/>
    <property type="evidence" value="ECO:0007669"/>
    <property type="project" value="UniProtKB-UniRule"/>
</dbReference>
<dbReference type="GO" id="GO:0048038">
    <property type="term" value="F:quinone binding"/>
    <property type="evidence" value="ECO:0007669"/>
    <property type="project" value="UniProtKB-KW"/>
</dbReference>
<dbReference type="HAMAP" id="MF_01353">
    <property type="entry name" value="NDH1_NDH1N"/>
    <property type="match status" value="1"/>
</dbReference>
<dbReference type="InterPro" id="IPR020874">
    <property type="entry name" value="NAD(P)H-quinone_OxRdtase_su_N"/>
</dbReference>
<dbReference type="PANTHER" id="PTHR35515">
    <property type="entry name" value="NAD(P)H-QUINONE OXIDOREDUCTASE SUBUNIT N, CHLOROPLASTIC"/>
    <property type="match status" value="1"/>
</dbReference>
<dbReference type="PANTHER" id="PTHR35515:SF1">
    <property type="entry name" value="NAD(P)H-QUINONE OXIDOREDUCTASE SUBUNIT N, CHLOROPLASTIC"/>
    <property type="match status" value="1"/>
</dbReference>
<dbReference type="Pfam" id="PF11909">
    <property type="entry name" value="NdhN"/>
    <property type="match status" value="1"/>
</dbReference>
<organism>
    <name type="scientific">Nostoc punctiforme (strain ATCC 29133 / PCC 73102)</name>
    <dbReference type="NCBI Taxonomy" id="63737"/>
    <lineage>
        <taxon>Bacteria</taxon>
        <taxon>Bacillati</taxon>
        <taxon>Cyanobacteriota</taxon>
        <taxon>Cyanophyceae</taxon>
        <taxon>Nostocales</taxon>
        <taxon>Nostocaceae</taxon>
        <taxon>Nostoc</taxon>
    </lineage>
</organism>
<reference key="1">
    <citation type="journal article" date="2013" name="Plant Physiol.">
        <title>A Nostoc punctiforme Sugar Transporter Necessary to Establish a Cyanobacterium-Plant Symbiosis.</title>
        <authorList>
            <person name="Ekman M."/>
            <person name="Picossi S."/>
            <person name="Campbell E.L."/>
            <person name="Meeks J.C."/>
            <person name="Flores E."/>
        </authorList>
    </citation>
    <scope>NUCLEOTIDE SEQUENCE [LARGE SCALE GENOMIC DNA]</scope>
    <source>
        <strain>ATCC 29133 / PCC 73102</strain>
    </source>
</reference>
<accession>B2ITQ6</accession>
<keyword id="KW-0472">Membrane</keyword>
<keyword id="KW-0520">NAD</keyword>
<keyword id="KW-0521">NADP</keyword>
<keyword id="KW-0618">Plastoquinone</keyword>
<keyword id="KW-0874">Quinone</keyword>
<keyword id="KW-1185">Reference proteome</keyword>
<keyword id="KW-0793">Thylakoid</keyword>
<keyword id="KW-1278">Translocase</keyword>
<keyword id="KW-0813">Transport</keyword>
<comment type="function">
    <text evidence="1">NDH-1 shuttles electrons from an unknown electron donor, via FMN and iron-sulfur (Fe-S) centers, to quinones in the respiratory and/or the photosynthetic chain. The immediate electron acceptor for the enzyme in this species is believed to be plastoquinone. Couples the redox reaction to proton translocation, and thus conserves the redox energy in a proton gradient. Cyanobacterial NDH-1 also plays a role in inorganic carbon-concentration.</text>
</comment>
<comment type="catalytic activity">
    <reaction evidence="1">
        <text>a plastoquinone + NADH + (n+1) H(+)(in) = a plastoquinol + NAD(+) + n H(+)(out)</text>
        <dbReference type="Rhea" id="RHEA:42608"/>
        <dbReference type="Rhea" id="RHEA-COMP:9561"/>
        <dbReference type="Rhea" id="RHEA-COMP:9562"/>
        <dbReference type="ChEBI" id="CHEBI:15378"/>
        <dbReference type="ChEBI" id="CHEBI:17757"/>
        <dbReference type="ChEBI" id="CHEBI:57540"/>
        <dbReference type="ChEBI" id="CHEBI:57945"/>
        <dbReference type="ChEBI" id="CHEBI:62192"/>
    </reaction>
</comment>
<comment type="catalytic activity">
    <reaction evidence="1">
        <text>a plastoquinone + NADPH + (n+1) H(+)(in) = a plastoquinol + NADP(+) + n H(+)(out)</text>
        <dbReference type="Rhea" id="RHEA:42612"/>
        <dbReference type="Rhea" id="RHEA-COMP:9561"/>
        <dbReference type="Rhea" id="RHEA-COMP:9562"/>
        <dbReference type="ChEBI" id="CHEBI:15378"/>
        <dbReference type="ChEBI" id="CHEBI:17757"/>
        <dbReference type="ChEBI" id="CHEBI:57783"/>
        <dbReference type="ChEBI" id="CHEBI:58349"/>
        <dbReference type="ChEBI" id="CHEBI:62192"/>
    </reaction>
</comment>
<comment type="subunit">
    <text evidence="1">NDH-1 can be composed of about 15 different subunits; different subcomplexes with different compositions have been identified which probably have different functions.</text>
</comment>
<comment type="subcellular location">
    <subcellularLocation>
        <location evidence="1">Cellular thylakoid membrane</location>
        <topology evidence="1">Peripheral membrane protein</topology>
        <orientation evidence="1">Cytoplasmic side</orientation>
    </subcellularLocation>
</comment>
<comment type="similarity">
    <text evidence="1">Belongs to the complex I NdhN subunit family.</text>
</comment>
<protein>
    <recommendedName>
        <fullName evidence="1">NAD(P)H-quinone oxidoreductase subunit N</fullName>
        <ecNumber evidence="1">7.1.1.-</ecNumber>
    </recommendedName>
    <alternativeName>
        <fullName evidence="1">NAD(P)H dehydrogenase I subunit N</fullName>
        <shortName evidence="1">NDH-1 subunit N</shortName>
        <shortName evidence="1">NDH-N</shortName>
    </alternativeName>
</protein>
<name>NDHN_NOSP7</name>
<evidence type="ECO:0000255" key="1">
    <source>
        <dbReference type="HAMAP-Rule" id="MF_01353"/>
    </source>
</evidence>
<sequence>MALITTGNGLIRDLEKFGALGVYVPLEGGYEGRYQRRLRAAGYTTLHITAKGLGDVAAYLTRIHGVRPPHLGKKSTGSGAAVGQVYYLPPILDSHLEQLPPKSKGLVLWIIEGHILSNEELEYLTNLPQLEPRVKVVIERGGDRAFRWTSLEKTLLAS</sequence>